<organism>
    <name type="scientific">Chlorobium phaeobacteroides (strain BS1)</name>
    <dbReference type="NCBI Taxonomy" id="331678"/>
    <lineage>
        <taxon>Bacteria</taxon>
        <taxon>Pseudomonadati</taxon>
        <taxon>Chlorobiota</taxon>
        <taxon>Chlorobiia</taxon>
        <taxon>Chlorobiales</taxon>
        <taxon>Chlorobiaceae</taxon>
        <taxon>Chlorobium/Pelodictyon group</taxon>
        <taxon>Chlorobium</taxon>
    </lineage>
</organism>
<dbReference type="EC" id="2.1.2.3" evidence="1"/>
<dbReference type="EC" id="3.5.4.10" evidence="1"/>
<dbReference type="EMBL" id="CP001101">
    <property type="protein sequence ID" value="ACE04794.1"/>
    <property type="molecule type" value="Genomic_DNA"/>
</dbReference>
<dbReference type="SMR" id="B3ELV3"/>
<dbReference type="STRING" id="331678.Cphamn1_1877"/>
<dbReference type="KEGG" id="cpb:Cphamn1_1877"/>
<dbReference type="eggNOG" id="COG0138">
    <property type="taxonomic scope" value="Bacteria"/>
</dbReference>
<dbReference type="HOGENOM" id="CLU_016316_5_2_10"/>
<dbReference type="OrthoDB" id="9802065at2"/>
<dbReference type="UniPathway" id="UPA00074">
    <property type="reaction ID" value="UER00133"/>
</dbReference>
<dbReference type="UniPathway" id="UPA00074">
    <property type="reaction ID" value="UER00135"/>
</dbReference>
<dbReference type="GO" id="GO:0005829">
    <property type="term" value="C:cytosol"/>
    <property type="evidence" value="ECO:0007669"/>
    <property type="project" value="TreeGrafter"/>
</dbReference>
<dbReference type="GO" id="GO:0003937">
    <property type="term" value="F:IMP cyclohydrolase activity"/>
    <property type="evidence" value="ECO:0007669"/>
    <property type="project" value="UniProtKB-UniRule"/>
</dbReference>
<dbReference type="GO" id="GO:0004643">
    <property type="term" value="F:phosphoribosylaminoimidazolecarboxamide formyltransferase activity"/>
    <property type="evidence" value="ECO:0007669"/>
    <property type="project" value="UniProtKB-UniRule"/>
</dbReference>
<dbReference type="GO" id="GO:0006189">
    <property type="term" value="P:'de novo' IMP biosynthetic process"/>
    <property type="evidence" value="ECO:0007669"/>
    <property type="project" value="UniProtKB-UniRule"/>
</dbReference>
<dbReference type="CDD" id="cd01421">
    <property type="entry name" value="IMPCH"/>
    <property type="match status" value="1"/>
</dbReference>
<dbReference type="FunFam" id="3.40.140.20:FF:000001">
    <property type="entry name" value="Bifunctional purine biosynthesis protein PurH"/>
    <property type="match status" value="1"/>
</dbReference>
<dbReference type="FunFam" id="3.40.50.1380:FF:000001">
    <property type="entry name" value="Bifunctional purine biosynthesis protein PurH"/>
    <property type="match status" value="1"/>
</dbReference>
<dbReference type="Gene3D" id="3.40.140.20">
    <property type="match status" value="2"/>
</dbReference>
<dbReference type="Gene3D" id="3.40.50.1380">
    <property type="entry name" value="Methylglyoxal synthase-like domain"/>
    <property type="match status" value="1"/>
</dbReference>
<dbReference type="HAMAP" id="MF_00139">
    <property type="entry name" value="PurH"/>
    <property type="match status" value="1"/>
</dbReference>
<dbReference type="InterPro" id="IPR024051">
    <property type="entry name" value="AICAR_Tfase_dup_dom_sf"/>
</dbReference>
<dbReference type="InterPro" id="IPR016193">
    <property type="entry name" value="Cytidine_deaminase-like"/>
</dbReference>
<dbReference type="InterPro" id="IPR011607">
    <property type="entry name" value="MGS-like_dom"/>
</dbReference>
<dbReference type="InterPro" id="IPR036914">
    <property type="entry name" value="MGS-like_dom_sf"/>
</dbReference>
<dbReference type="InterPro" id="IPR002695">
    <property type="entry name" value="PurH-like"/>
</dbReference>
<dbReference type="NCBIfam" id="NF002049">
    <property type="entry name" value="PRK00881.1"/>
    <property type="match status" value="1"/>
</dbReference>
<dbReference type="NCBIfam" id="TIGR00355">
    <property type="entry name" value="purH"/>
    <property type="match status" value="1"/>
</dbReference>
<dbReference type="PANTHER" id="PTHR11692:SF0">
    <property type="entry name" value="BIFUNCTIONAL PURINE BIOSYNTHESIS PROTEIN ATIC"/>
    <property type="match status" value="1"/>
</dbReference>
<dbReference type="PANTHER" id="PTHR11692">
    <property type="entry name" value="BIFUNCTIONAL PURINE BIOSYNTHESIS PROTEIN PURH"/>
    <property type="match status" value="1"/>
</dbReference>
<dbReference type="Pfam" id="PF01808">
    <property type="entry name" value="AICARFT_IMPCHas"/>
    <property type="match status" value="1"/>
</dbReference>
<dbReference type="Pfam" id="PF02142">
    <property type="entry name" value="MGS"/>
    <property type="match status" value="1"/>
</dbReference>
<dbReference type="PIRSF" id="PIRSF000414">
    <property type="entry name" value="AICARFT_IMPCHas"/>
    <property type="match status" value="1"/>
</dbReference>
<dbReference type="SMART" id="SM00798">
    <property type="entry name" value="AICARFT_IMPCHas"/>
    <property type="match status" value="1"/>
</dbReference>
<dbReference type="SMART" id="SM00851">
    <property type="entry name" value="MGS"/>
    <property type="match status" value="1"/>
</dbReference>
<dbReference type="SUPFAM" id="SSF53927">
    <property type="entry name" value="Cytidine deaminase-like"/>
    <property type="match status" value="1"/>
</dbReference>
<dbReference type="SUPFAM" id="SSF52335">
    <property type="entry name" value="Methylglyoxal synthase-like"/>
    <property type="match status" value="1"/>
</dbReference>
<dbReference type="PROSITE" id="PS51855">
    <property type="entry name" value="MGS"/>
    <property type="match status" value="1"/>
</dbReference>
<proteinExistence type="inferred from homology"/>
<gene>
    <name evidence="1" type="primary">purH</name>
    <name type="ordered locus">Cphamn1_1877</name>
</gene>
<sequence length="525" mass="57423">MSDPVIKRALVSVSDKSGVVEFCRELSSMGVEIFSTGGTLRKLQESGVAAASISTITGFPEIMDGRVKTLHPKIHGGLLAVRDNADHIAQARDNGIGFIDMVVVNLYPFQETVAKPDVTFEEAIENIDIGGPSMLRSAAKNHESVTVITESADYRTVLDEMRENNGATTRSTRLKLAGKVFTLTSRYDRAIADYLAASSEGEASSEAGSISVRLEKEIDMRYGENPHQNAGFYRMDDGSGSRSFEEYFRKLHGKDLSYNNMLDTAAATALIEEFRDEAPAVVIIKHTNPCGVAQADTLVEAYRKAFSTDTQSPFGGIIACNRPLDMETAKAIDEIFTEILIAPAYEEGVLDMLMKKKNRRLLLQRKPLLQEVTEYKSTRFGMLVQERDSRIASRDDLKVVTKRQPSAQELDDLMFAWKICKHVKSNTIVYVKNRQTVGVGAGQMSRVDSAKIARSKAAEAGLDLNGSAVASDAFFPFADGLLAAAEAGAMAVIQPGGSVRDDEVIAAADEHDLAMVFTSMRHFKH</sequence>
<protein>
    <recommendedName>
        <fullName evidence="1">Bifunctional purine biosynthesis protein PurH</fullName>
    </recommendedName>
    <domain>
        <recommendedName>
            <fullName evidence="1">Phosphoribosylaminoimidazolecarboxamide formyltransferase</fullName>
            <ecNumber evidence="1">2.1.2.3</ecNumber>
        </recommendedName>
        <alternativeName>
            <fullName evidence="1">AICAR transformylase</fullName>
        </alternativeName>
    </domain>
    <domain>
        <recommendedName>
            <fullName evidence="1">IMP cyclohydrolase</fullName>
            <ecNumber evidence="1">3.5.4.10</ecNumber>
        </recommendedName>
        <alternativeName>
            <fullName evidence="1">ATIC</fullName>
        </alternativeName>
        <alternativeName>
            <fullName evidence="1">IMP synthase</fullName>
        </alternativeName>
        <alternativeName>
            <fullName evidence="1">Inosinicase</fullName>
        </alternativeName>
    </domain>
</protein>
<comment type="catalytic activity">
    <reaction evidence="1">
        <text>(6R)-10-formyltetrahydrofolate + 5-amino-1-(5-phospho-beta-D-ribosyl)imidazole-4-carboxamide = 5-formamido-1-(5-phospho-D-ribosyl)imidazole-4-carboxamide + (6S)-5,6,7,8-tetrahydrofolate</text>
        <dbReference type="Rhea" id="RHEA:22192"/>
        <dbReference type="ChEBI" id="CHEBI:57453"/>
        <dbReference type="ChEBI" id="CHEBI:58467"/>
        <dbReference type="ChEBI" id="CHEBI:58475"/>
        <dbReference type="ChEBI" id="CHEBI:195366"/>
        <dbReference type="EC" id="2.1.2.3"/>
    </reaction>
</comment>
<comment type="catalytic activity">
    <reaction evidence="1">
        <text>IMP + H2O = 5-formamido-1-(5-phospho-D-ribosyl)imidazole-4-carboxamide</text>
        <dbReference type="Rhea" id="RHEA:18445"/>
        <dbReference type="ChEBI" id="CHEBI:15377"/>
        <dbReference type="ChEBI" id="CHEBI:58053"/>
        <dbReference type="ChEBI" id="CHEBI:58467"/>
        <dbReference type="EC" id="3.5.4.10"/>
    </reaction>
</comment>
<comment type="pathway">
    <text evidence="1">Purine metabolism; IMP biosynthesis via de novo pathway; 5-formamido-1-(5-phospho-D-ribosyl)imidazole-4-carboxamide from 5-amino-1-(5-phospho-D-ribosyl)imidazole-4-carboxamide (10-formyl THF route): step 1/1.</text>
</comment>
<comment type="pathway">
    <text evidence="1">Purine metabolism; IMP biosynthesis via de novo pathway; IMP from 5-formamido-1-(5-phospho-D-ribosyl)imidazole-4-carboxamide: step 1/1.</text>
</comment>
<comment type="domain">
    <text evidence="1">The IMP cyclohydrolase activity resides in the N-terminal region.</text>
</comment>
<comment type="similarity">
    <text evidence="1">Belongs to the PurH family.</text>
</comment>
<accession>B3ELV3</accession>
<evidence type="ECO:0000255" key="1">
    <source>
        <dbReference type="HAMAP-Rule" id="MF_00139"/>
    </source>
</evidence>
<evidence type="ECO:0000255" key="2">
    <source>
        <dbReference type="PROSITE-ProRule" id="PRU01202"/>
    </source>
</evidence>
<reference key="1">
    <citation type="submission" date="2008-06" db="EMBL/GenBank/DDBJ databases">
        <title>Complete sequence of Chlorobium phaeobacteroides BS1.</title>
        <authorList>
            <consortium name="US DOE Joint Genome Institute"/>
            <person name="Lucas S."/>
            <person name="Copeland A."/>
            <person name="Lapidus A."/>
            <person name="Glavina del Rio T."/>
            <person name="Dalin E."/>
            <person name="Tice H."/>
            <person name="Bruce D."/>
            <person name="Goodwin L."/>
            <person name="Pitluck S."/>
            <person name="Schmutz J."/>
            <person name="Larimer F."/>
            <person name="Land M."/>
            <person name="Hauser L."/>
            <person name="Kyrpides N."/>
            <person name="Ovchinnikova G."/>
            <person name="Li T."/>
            <person name="Liu Z."/>
            <person name="Zhao F."/>
            <person name="Overmann J."/>
            <person name="Bryant D.A."/>
            <person name="Richardson P."/>
        </authorList>
    </citation>
    <scope>NUCLEOTIDE SEQUENCE [LARGE SCALE GENOMIC DNA]</scope>
    <source>
        <strain>BS1</strain>
    </source>
</reference>
<keyword id="KW-0378">Hydrolase</keyword>
<keyword id="KW-0511">Multifunctional enzyme</keyword>
<keyword id="KW-0658">Purine biosynthesis</keyword>
<keyword id="KW-0808">Transferase</keyword>
<name>PUR9_CHLPB</name>
<feature type="chain" id="PRO_1000096051" description="Bifunctional purine biosynthesis protein PurH">
    <location>
        <begin position="1"/>
        <end position="525"/>
    </location>
</feature>
<feature type="domain" description="MGS-like" evidence="2">
    <location>
        <begin position="1"/>
        <end position="149"/>
    </location>
</feature>